<proteinExistence type="inferred from homology"/>
<accession>B4T9C5</accession>
<organism>
    <name type="scientific">Salmonella heidelberg (strain SL476)</name>
    <dbReference type="NCBI Taxonomy" id="454169"/>
    <lineage>
        <taxon>Bacteria</taxon>
        <taxon>Pseudomonadati</taxon>
        <taxon>Pseudomonadota</taxon>
        <taxon>Gammaproteobacteria</taxon>
        <taxon>Enterobacterales</taxon>
        <taxon>Enterobacteriaceae</taxon>
        <taxon>Salmonella</taxon>
    </lineage>
</organism>
<keyword id="KW-0131">Cell cycle</keyword>
<keyword id="KW-0132">Cell division</keyword>
<keyword id="KW-0175">Coiled coil</keyword>
<keyword id="KW-0963">Cytoplasm</keyword>
<keyword id="KW-0238">DNA-binding</keyword>
<evidence type="ECO:0000255" key="1">
    <source>
        <dbReference type="HAMAP-Rule" id="MF_01839"/>
    </source>
</evidence>
<comment type="function">
    <text evidence="1">Required for nucleoid occlusion (NO) phenomenon, which prevents Z-ring formation and cell division over the nucleoid. Acts as a DNA-associated cell division inhibitor that binds simultaneously chromosomal DNA and FtsZ, and disrupts the assembly of FtsZ polymers. SlmA-DNA-binding sequences (SBS) are dispersed on non-Ter regions of the chromosome, preventing FtsZ polymerization at these regions.</text>
</comment>
<comment type="subunit">
    <text evidence="1">Homodimer. Interacts with FtsZ.</text>
</comment>
<comment type="subcellular location">
    <subcellularLocation>
        <location evidence="1">Cytoplasm</location>
        <location evidence="1">Nucleoid</location>
    </subcellularLocation>
</comment>
<comment type="similarity">
    <text evidence="1">Belongs to the nucleoid occlusion factor SlmA family.</text>
</comment>
<protein>
    <recommendedName>
        <fullName evidence="1">Nucleoid occlusion factor SlmA</fullName>
    </recommendedName>
</protein>
<name>SLMA_SALHS</name>
<gene>
    <name evidence="1" type="primary">slmA</name>
    <name type="ordered locus">SeHA_C4058</name>
</gene>
<sequence length="198" mass="22864">MAEKQTAKRNRREEILQSLALMLESSDGSQRITTAKLAASVGVSEAALYRHFPSKTRMFDSLIEFIEDSLITRINLILKDEKNTSTRLRLIVLLILGFGERNPGLTRILTGHALMFEQDRLQGRINQLFERIEAQLRQVLREKRMREGEGYTTDENLLASQLLAFCEGMLSRFVRSEFKYRPTDDFDARWPLIAAQLQ</sequence>
<feature type="chain" id="PRO_1000188397" description="Nucleoid occlusion factor SlmA">
    <location>
        <begin position="1"/>
        <end position="198"/>
    </location>
</feature>
<feature type="domain" description="HTH tetR-type" evidence="1">
    <location>
        <begin position="10"/>
        <end position="70"/>
    </location>
</feature>
<feature type="DNA-binding region" description="H-T-H motif" evidence="1">
    <location>
        <begin position="33"/>
        <end position="52"/>
    </location>
</feature>
<feature type="coiled-coil region" evidence="1">
    <location>
        <begin position="117"/>
        <end position="144"/>
    </location>
</feature>
<dbReference type="EMBL" id="CP001120">
    <property type="protein sequence ID" value="ACF68452.1"/>
    <property type="molecule type" value="Genomic_DNA"/>
</dbReference>
<dbReference type="RefSeq" id="WP_000818607.1">
    <property type="nucleotide sequence ID" value="NC_011083.1"/>
</dbReference>
<dbReference type="SMR" id="B4T9C5"/>
<dbReference type="KEGG" id="seh:SeHA_C4058"/>
<dbReference type="HOGENOM" id="CLU_069356_5_0_6"/>
<dbReference type="Proteomes" id="UP000001866">
    <property type="component" value="Chromosome"/>
</dbReference>
<dbReference type="GO" id="GO:0043590">
    <property type="term" value="C:bacterial nucleoid"/>
    <property type="evidence" value="ECO:0007669"/>
    <property type="project" value="UniProtKB-UniRule"/>
</dbReference>
<dbReference type="GO" id="GO:0005737">
    <property type="term" value="C:cytoplasm"/>
    <property type="evidence" value="ECO:0007669"/>
    <property type="project" value="UniProtKB-UniRule"/>
</dbReference>
<dbReference type="GO" id="GO:0003700">
    <property type="term" value="F:DNA-binding transcription factor activity"/>
    <property type="evidence" value="ECO:0007669"/>
    <property type="project" value="TreeGrafter"/>
</dbReference>
<dbReference type="GO" id="GO:0000976">
    <property type="term" value="F:transcription cis-regulatory region binding"/>
    <property type="evidence" value="ECO:0007669"/>
    <property type="project" value="TreeGrafter"/>
</dbReference>
<dbReference type="GO" id="GO:0051301">
    <property type="term" value="P:cell division"/>
    <property type="evidence" value="ECO:0007669"/>
    <property type="project" value="UniProtKB-KW"/>
</dbReference>
<dbReference type="GO" id="GO:0010974">
    <property type="term" value="P:negative regulation of division septum assembly"/>
    <property type="evidence" value="ECO:0007669"/>
    <property type="project" value="InterPro"/>
</dbReference>
<dbReference type="FunFam" id="1.10.357.10:FF:000002">
    <property type="entry name" value="Nucleoid occlusion factor SlmA"/>
    <property type="match status" value="1"/>
</dbReference>
<dbReference type="Gene3D" id="1.10.357.10">
    <property type="entry name" value="Tetracycline Repressor, domain 2"/>
    <property type="match status" value="1"/>
</dbReference>
<dbReference type="HAMAP" id="MF_01839">
    <property type="entry name" value="NO_factor_SlmA"/>
    <property type="match status" value="1"/>
</dbReference>
<dbReference type="InterPro" id="IPR023772">
    <property type="entry name" value="DNA-bd_HTH_TetR-type_CS"/>
</dbReference>
<dbReference type="InterPro" id="IPR009057">
    <property type="entry name" value="Homeodomain-like_sf"/>
</dbReference>
<dbReference type="InterPro" id="IPR050109">
    <property type="entry name" value="HTH-type_TetR-like_transc_reg"/>
</dbReference>
<dbReference type="InterPro" id="IPR001647">
    <property type="entry name" value="HTH_TetR"/>
</dbReference>
<dbReference type="InterPro" id="IPR023769">
    <property type="entry name" value="NO_SlmA"/>
</dbReference>
<dbReference type="InterPro" id="IPR054580">
    <property type="entry name" value="SlmA-like_C"/>
</dbReference>
<dbReference type="InterPro" id="IPR036271">
    <property type="entry name" value="Tet_transcr_reg_TetR-rel_C_sf"/>
</dbReference>
<dbReference type="NCBIfam" id="NF007015">
    <property type="entry name" value="PRK09480.1"/>
    <property type="match status" value="1"/>
</dbReference>
<dbReference type="PANTHER" id="PTHR30055">
    <property type="entry name" value="HTH-TYPE TRANSCRIPTIONAL REGULATOR RUTR"/>
    <property type="match status" value="1"/>
</dbReference>
<dbReference type="PANTHER" id="PTHR30055:SF183">
    <property type="entry name" value="NUCLEOID OCCLUSION FACTOR SLMA"/>
    <property type="match status" value="1"/>
</dbReference>
<dbReference type="Pfam" id="PF22276">
    <property type="entry name" value="SlmA-like_C"/>
    <property type="match status" value="1"/>
</dbReference>
<dbReference type="Pfam" id="PF00440">
    <property type="entry name" value="TetR_N"/>
    <property type="match status" value="1"/>
</dbReference>
<dbReference type="SUPFAM" id="SSF46689">
    <property type="entry name" value="Homeodomain-like"/>
    <property type="match status" value="1"/>
</dbReference>
<dbReference type="SUPFAM" id="SSF48498">
    <property type="entry name" value="Tetracyclin repressor-like, C-terminal domain"/>
    <property type="match status" value="1"/>
</dbReference>
<dbReference type="PROSITE" id="PS01081">
    <property type="entry name" value="HTH_TETR_1"/>
    <property type="match status" value="1"/>
</dbReference>
<dbReference type="PROSITE" id="PS50977">
    <property type="entry name" value="HTH_TETR_2"/>
    <property type="match status" value="1"/>
</dbReference>
<reference key="1">
    <citation type="journal article" date="2011" name="J. Bacteriol.">
        <title>Comparative genomics of 28 Salmonella enterica isolates: evidence for CRISPR-mediated adaptive sublineage evolution.</title>
        <authorList>
            <person name="Fricke W.F."/>
            <person name="Mammel M.K."/>
            <person name="McDermott P.F."/>
            <person name="Tartera C."/>
            <person name="White D.G."/>
            <person name="Leclerc J.E."/>
            <person name="Ravel J."/>
            <person name="Cebula T.A."/>
        </authorList>
    </citation>
    <scope>NUCLEOTIDE SEQUENCE [LARGE SCALE GENOMIC DNA]</scope>
    <source>
        <strain>SL476</strain>
    </source>
</reference>